<reference key="1">
    <citation type="journal article" date="2003" name="Mol. Microbiol.">
        <title>Genome-based analysis of virulence genes in a non-biofilm-forming Staphylococcus epidermidis strain (ATCC 12228).</title>
        <authorList>
            <person name="Zhang Y.-Q."/>
            <person name="Ren S.-X."/>
            <person name="Li H.-L."/>
            <person name="Wang Y.-X."/>
            <person name="Fu G."/>
            <person name="Yang J."/>
            <person name="Qin Z.-Q."/>
            <person name="Miao Y.-G."/>
            <person name="Wang W.-Y."/>
            <person name="Chen R.-S."/>
            <person name="Shen Y."/>
            <person name="Chen Z."/>
            <person name="Yuan Z.-H."/>
            <person name="Zhao G.-P."/>
            <person name="Qu D."/>
            <person name="Danchin A."/>
            <person name="Wen Y.-M."/>
        </authorList>
    </citation>
    <scope>NUCLEOTIDE SEQUENCE [LARGE SCALE GENOMIC DNA]</scope>
    <source>
        <strain>ATCC 12228 / FDA PCI 1200</strain>
    </source>
</reference>
<keyword id="KW-0067">ATP-binding</keyword>
<keyword id="KW-0143">Chaperone</keyword>
<keyword id="KW-0547">Nucleotide-binding</keyword>
<keyword id="KW-0677">Repeat</keyword>
<keyword id="KW-0346">Stress response</keyword>
<dbReference type="EMBL" id="AE015929">
    <property type="protein sequence ID" value="AAO03884.1"/>
    <property type="molecule type" value="Genomic_DNA"/>
</dbReference>
<dbReference type="RefSeq" id="NP_763842.1">
    <property type="nucleotide sequence ID" value="NC_004461.1"/>
</dbReference>
<dbReference type="RefSeq" id="WP_002445729.1">
    <property type="nucleotide sequence ID" value="NZ_WBME01000014.1"/>
</dbReference>
<dbReference type="SMR" id="Q8CQ88"/>
<dbReference type="KEGG" id="sep:SE_0287"/>
<dbReference type="PATRIC" id="fig|176280.10.peg.263"/>
<dbReference type="eggNOG" id="COG0542">
    <property type="taxonomic scope" value="Bacteria"/>
</dbReference>
<dbReference type="HOGENOM" id="CLU_005070_4_1_9"/>
<dbReference type="OrthoDB" id="9803641at2"/>
<dbReference type="Proteomes" id="UP000001411">
    <property type="component" value="Chromosome"/>
</dbReference>
<dbReference type="GO" id="GO:0005737">
    <property type="term" value="C:cytoplasm"/>
    <property type="evidence" value="ECO:0007669"/>
    <property type="project" value="TreeGrafter"/>
</dbReference>
<dbReference type="GO" id="GO:0005524">
    <property type="term" value="F:ATP binding"/>
    <property type="evidence" value="ECO:0007669"/>
    <property type="project" value="UniProtKB-KW"/>
</dbReference>
<dbReference type="GO" id="GO:0016887">
    <property type="term" value="F:ATP hydrolysis activity"/>
    <property type="evidence" value="ECO:0007669"/>
    <property type="project" value="InterPro"/>
</dbReference>
<dbReference type="GO" id="GO:0034605">
    <property type="term" value="P:cellular response to heat"/>
    <property type="evidence" value="ECO:0007669"/>
    <property type="project" value="TreeGrafter"/>
</dbReference>
<dbReference type="CDD" id="cd00009">
    <property type="entry name" value="AAA"/>
    <property type="match status" value="1"/>
</dbReference>
<dbReference type="CDD" id="cd19499">
    <property type="entry name" value="RecA-like_ClpB_Hsp104-like"/>
    <property type="match status" value="1"/>
</dbReference>
<dbReference type="FunFam" id="1.10.8.60:FF:000017">
    <property type="entry name" value="ATP-dependent chaperone ClpB"/>
    <property type="match status" value="1"/>
</dbReference>
<dbReference type="FunFam" id="1.10.8.60:FF:000011">
    <property type="entry name" value="ATP-dependent Clp protease ATP-binding subunit"/>
    <property type="match status" value="1"/>
</dbReference>
<dbReference type="FunFam" id="3.40.50.300:FF:000025">
    <property type="entry name" value="ATP-dependent Clp protease subunit"/>
    <property type="match status" value="1"/>
</dbReference>
<dbReference type="FunFam" id="3.40.50.300:FF:000010">
    <property type="entry name" value="Chaperone clpB 1, putative"/>
    <property type="match status" value="1"/>
</dbReference>
<dbReference type="Gene3D" id="1.10.8.60">
    <property type="match status" value="2"/>
</dbReference>
<dbReference type="Gene3D" id="1.10.1780.10">
    <property type="entry name" value="Clp, N-terminal domain"/>
    <property type="match status" value="1"/>
</dbReference>
<dbReference type="Gene3D" id="3.40.50.300">
    <property type="entry name" value="P-loop containing nucleotide triphosphate hydrolases"/>
    <property type="match status" value="2"/>
</dbReference>
<dbReference type="Gene3D" id="4.10.860.10">
    <property type="entry name" value="UVR domain"/>
    <property type="match status" value="1"/>
</dbReference>
<dbReference type="InterPro" id="IPR003593">
    <property type="entry name" value="AAA+_ATPase"/>
</dbReference>
<dbReference type="InterPro" id="IPR003959">
    <property type="entry name" value="ATPase_AAA_core"/>
</dbReference>
<dbReference type="InterPro" id="IPR019489">
    <property type="entry name" value="Clp_ATPase_C"/>
</dbReference>
<dbReference type="InterPro" id="IPR036628">
    <property type="entry name" value="Clp_N_dom_sf"/>
</dbReference>
<dbReference type="InterPro" id="IPR004176">
    <property type="entry name" value="Clp_R_dom"/>
</dbReference>
<dbReference type="InterPro" id="IPR001270">
    <property type="entry name" value="ClpA/B"/>
</dbReference>
<dbReference type="InterPro" id="IPR018368">
    <property type="entry name" value="ClpA/B_CS1"/>
</dbReference>
<dbReference type="InterPro" id="IPR028299">
    <property type="entry name" value="ClpA/B_CS2"/>
</dbReference>
<dbReference type="InterPro" id="IPR041546">
    <property type="entry name" value="ClpA/ClpB_AAA_lid"/>
</dbReference>
<dbReference type="InterPro" id="IPR050130">
    <property type="entry name" value="ClpA_ClpB"/>
</dbReference>
<dbReference type="InterPro" id="IPR027417">
    <property type="entry name" value="P-loop_NTPase"/>
</dbReference>
<dbReference type="InterPro" id="IPR001943">
    <property type="entry name" value="UVR_dom"/>
</dbReference>
<dbReference type="PANTHER" id="PTHR11638">
    <property type="entry name" value="ATP-DEPENDENT CLP PROTEASE"/>
    <property type="match status" value="1"/>
</dbReference>
<dbReference type="PANTHER" id="PTHR11638:SF18">
    <property type="entry name" value="HEAT SHOCK PROTEIN 104"/>
    <property type="match status" value="1"/>
</dbReference>
<dbReference type="Pfam" id="PF00004">
    <property type="entry name" value="AAA"/>
    <property type="match status" value="1"/>
</dbReference>
<dbReference type="Pfam" id="PF07724">
    <property type="entry name" value="AAA_2"/>
    <property type="match status" value="1"/>
</dbReference>
<dbReference type="Pfam" id="PF17871">
    <property type="entry name" value="AAA_lid_9"/>
    <property type="match status" value="1"/>
</dbReference>
<dbReference type="Pfam" id="PF02861">
    <property type="entry name" value="Clp_N"/>
    <property type="match status" value="2"/>
</dbReference>
<dbReference type="Pfam" id="PF10431">
    <property type="entry name" value="ClpB_D2-small"/>
    <property type="match status" value="1"/>
</dbReference>
<dbReference type="PRINTS" id="PR00300">
    <property type="entry name" value="CLPPROTEASEA"/>
</dbReference>
<dbReference type="SMART" id="SM00382">
    <property type="entry name" value="AAA"/>
    <property type="match status" value="2"/>
</dbReference>
<dbReference type="SMART" id="SM01086">
    <property type="entry name" value="ClpB_D2-small"/>
    <property type="match status" value="1"/>
</dbReference>
<dbReference type="SUPFAM" id="SSF81923">
    <property type="entry name" value="Double Clp-N motif"/>
    <property type="match status" value="1"/>
</dbReference>
<dbReference type="SUPFAM" id="SSF52540">
    <property type="entry name" value="P-loop containing nucleoside triphosphate hydrolases"/>
    <property type="match status" value="2"/>
</dbReference>
<dbReference type="PROSITE" id="PS51903">
    <property type="entry name" value="CLP_R"/>
    <property type="match status" value="1"/>
</dbReference>
<dbReference type="PROSITE" id="PS00870">
    <property type="entry name" value="CLPAB_1"/>
    <property type="match status" value="1"/>
</dbReference>
<dbReference type="PROSITE" id="PS00871">
    <property type="entry name" value="CLPAB_2"/>
    <property type="match status" value="1"/>
</dbReference>
<dbReference type="PROSITE" id="PS50151">
    <property type="entry name" value="UVR"/>
    <property type="match status" value="1"/>
</dbReference>
<organism>
    <name type="scientific">Staphylococcus epidermidis (strain ATCC 12228 / FDA PCI 1200)</name>
    <dbReference type="NCBI Taxonomy" id="176280"/>
    <lineage>
        <taxon>Bacteria</taxon>
        <taxon>Bacillati</taxon>
        <taxon>Bacillota</taxon>
        <taxon>Bacilli</taxon>
        <taxon>Bacillales</taxon>
        <taxon>Staphylococcaceae</taxon>
        <taxon>Staphylococcus</taxon>
    </lineage>
</organism>
<proteinExistence type="inferred from homology"/>
<feature type="chain" id="PRO_0000269689" description="ATP-dependent Clp protease ATP-binding subunit ClpC">
    <location>
        <begin position="1"/>
        <end position="817"/>
    </location>
</feature>
<feature type="domain" description="Clp R" evidence="4">
    <location>
        <begin position="3"/>
        <end position="144"/>
    </location>
</feature>
<feature type="domain" description="UVR" evidence="3">
    <location>
        <begin position="417"/>
        <end position="452"/>
    </location>
</feature>
<feature type="region of interest" description="Repeat 1" evidence="4">
    <location>
        <begin position="6"/>
        <end position="71"/>
    </location>
</feature>
<feature type="region of interest" description="Repeat 2" evidence="4">
    <location>
        <begin position="80"/>
        <end position="144"/>
    </location>
</feature>
<feature type="region of interest" description="I">
    <location>
        <begin position="163"/>
        <end position="410"/>
    </location>
</feature>
<feature type="region of interest" description="II">
    <location>
        <begin position="471"/>
        <end position="662"/>
    </location>
</feature>
<feature type="binding site" evidence="2">
    <location>
        <begin position="208"/>
        <end position="215"/>
    </location>
    <ligand>
        <name>ATP</name>
        <dbReference type="ChEBI" id="CHEBI:30616"/>
    </ligand>
</feature>
<feature type="binding site" evidence="2">
    <location>
        <begin position="545"/>
        <end position="552"/>
    </location>
    <ligand>
        <name>ATP</name>
        <dbReference type="ChEBI" id="CHEBI:30616"/>
    </ligand>
</feature>
<name>CLPC_STAES</name>
<protein>
    <recommendedName>
        <fullName>ATP-dependent Clp protease ATP-binding subunit ClpC</fullName>
    </recommendedName>
</protein>
<sequence>MLFGRLTERAQRVLAHAQEEAIRLNHSNIGTEHLLLGLMKEPEGIAAKVLVSFNITEDKVIEEVEKLIGHGQEQMGTLHYTPRAKKVIELSMDEARKLHHNFVGTEHILLGLIRENEGVAARVFANLDLNITKARAQVVKALGSPEMSNKNAQANKSNNTPTLDGLARDLTVIAKDGTLDPVVGRDKEITRVIEVLSRRTKNNPVLIGEPGVGKTAIAEGLAQAIVKNEVPETLKDKRVMSLDMGTVVAGTKYRGEFEERLKKVMEEIHQAGNVILFIDELHTLVGAGGAEGAIDASNILKPALARGELQCIGATTLDEYRKNIEKDAALERRFQPIQVDEPTVEDTIEILKGLRDRYEAHHRINISDEALEAAAKLSDRYVSDRFLPDKAIDLIDEASSKVRLKSHTTPSNLKEIEQEIDKVKNEKDAAVHAQEFENAANLRDKQSKLEKQYEDAKNEWKNAQGGLDTALSEENIAEVIAGWTGIPLTKINETESDRLLNLEDTLHKRVIGQNDAVNSISKAVRRARAGLKDPKRPIGSFIFLGPTGVGKTELARALAESMFGEDDAMIRVDMSEFMEKHAVSRLVGAPPGYVGHDDGGQLTEKVRRKPYSVILFDEIEKAHPDVFNILLQVLDDGHLTDTKGRTVDFRNTVIIMTSNVGAQELQDQRFAGFGGASEGSDYETVRKTMMKELKNSFRPEFLNRVDDIIVFHKLTKDELKEIVTMMVNKLTHRLSEQNINIVVTDKAKEKIAEEGYDPEYGARPLIRAIQKTVEDNLSELILDGNKIEGKEVTIDHDGKEFKYDIYEITAKKETTES</sequence>
<evidence type="ECO:0000250" key="1"/>
<evidence type="ECO:0000255" key="2"/>
<evidence type="ECO:0000255" key="3">
    <source>
        <dbReference type="PROSITE-ProRule" id="PRU00217"/>
    </source>
</evidence>
<evidence type="ECO:0000255" key="4">
    <source>
        <dbReference type="PROSITE-ProRule" id="PRU01251"/>
    </source>
</evidence>
<evidence type="ECO:0000305" key="5"/>
<gene>
    <name type="primary">clpC</name>
    <name type="ordered locus">SE_0287</name>
</gene>
<comment type="function">
    <text evidence="1">Required for growth at high temperatures, probably by acting as a chaperone during heat shock and targeting heat-denatured proteins for degradation by ClpP.</text>
</comment>
<comment type="similarity">
    <text evidence="5">Belongs to the ClpA/ClpB family. ClpC subfamily.</text>
</comment>
<accession>Q8CQ88</accession>